<feature type="chain" id="PRO_1000081561" description="Small ribosomal subunit protein uS10">
    <location>
        <begin position="1"/>
        <end position="103"/>
    </location>
</feature>
<gene>
    <name evidence="1" type="primary">rpsJ</name>
    <name type="ordered locus">PputGB1_0483</name>
</gene>
<accession>B0KK66</accession>
<name>RS10_PSEPG</name>
<reference key="1">
    <citation type="submission" date="2008-01" db="EMBL/GenBank/DDBJ databases">
        <title>Complete sequence of Pseudomonas putida GB-1.</title>
        <authorList>
            <consortium name="US DOE Joint Genome Institute"/>
            <person name="Copeland A."/>
            <person name="Lucas S."/>
            <person name="Lapidus A."/>
            <person name="Barry K."/>
            <person name="Glavina del Rio T."/>
            <person name="Dalin E."/>
            <person name="Tice H."/>
            <person name="Pitluck S."/>
            <person name="Bruce D."/>
            <person name="Goodwin L."/>
            <person name="Chertkov O."/>
            <person name="Brettin T."/>
            <person name="Detter J.C."/>
            <person name="Han C."/>
            <person name="Kuske C.R."/>
            <person name="Schmutz J."/>
            <person name="Larimer F."/>
            <person name="Land M."/>
            <person name="Hauser L."/>
            <person name="Kyrpides N."/>
            <person name="Kim E."/>
            <person name="McCarthy J.K."/>
            <person name="Richardson P."/>
        </authorList>
    </citation>
    <scope>NUCLEOTIDE SEQUENCE [LARGE SCALE GENOMIC DNA]</scope>
    <source>
        <strain>GB-1</strain>
    </source>
</reference>
<protein>
    <recommendedName>
        <fullName evidence="1">Small ribosomal subunit protein uS10</fullName>
    </recommendedName>
    <alternativeName>
        <fullName evidence="2">30S ribosomal protein S10</fullName>
    </alternativeName>
</protein>
<keyword id="KW-0687">Ribonucleoprotein</keyword>
<keyword id="KW-0689">Ribosomal protein</keyword>
<evidence type="ECO:0000255" key="1">
    <source>
        <dbReference type="HAMAP-Rule" id="MF_00508"/>
    </source>
</evidence>
<evidence type="ECO:0000305" key="2"/>
<proteinExistence type="inferred from homology"/>
<comment type="function">
    <text evidence="1">Involved in the binding of tRNA to the ribosomes.</text>
</comment>
<comment type="subunit">
    <text evidence="1">Part of the 30S ribosomal subunit.</text>
</comment>
<comment type="similarity">
    <text evidence="1">Belongs to the universal ribosomal protein uS10 family.</text>
</comment>
<sequence>MQNQQIRIRLKAFDHRLIDQSTQEIVETAKRTGAQVRGPIPLPTRKERFTVLVSPHVNKDARDQYEIRTHKRVLDIVQPTDKTVDALMKLDLAAGVEVQISLG</sequence>
<dbReference type="EMBL" id="CP000926">
    <property type="protein sequence ID" value="ABY96394.1"/>
    <property type="molecule type" value="Genomic_DNA"/>
</dbReference>
<dbReference type="RefSeq" id="WP_003186070.1">
    <property type="nucleotide sequence ID" value="NC_010322.1"/>
</dbReference>
<dbReference type="SMR" id="B0KK66"/>
<dbReference type="GeneID" id="98636782"/>
<dbReference type="KEGG" id="ppg:PputGB1_0483"/>
<dbReference type="eggNOG" id="COG0051">
    <property type="taxonomic scope" value="Bacteria"/>
</dbReference>
<dbReference type="HOGENOM" id="CLU_122625_1_3_6"/>
<dbReference type="Proteomes" id="UP000002157">
    <property type="component" value="Chromosome"/>
</dbReference>
<dbReference type="GO" id="GO:1990904">
    <property type="term" value="C:ribonucleoprotein complex"/>
    <property type="evidence" value="ECO:0007669"/>
    <property type="project" value="UniProtKB-KW"/>
</dbReference>
<dbReference type="GO" id="GO:0005840">
    <property type="term" value="C:ribosome"/>
    <property type="evidence" value="ECO:0007669"/>
    <property type="project" value="UniProtKB-KW"/>
</dbReference>
<dbReference type="GO" id="GO:0003735">
    <property type="term" value="F:structural constituent of ribosome"/>
    <property type="evidence" value="ECO:0007669"/>
    <property type="project" value="InterPro"/>
</dbReference>
<dbReference type="GO" id="GO:0000049">
    <property type="term" value="F:tRNA binding"/>
    <property type="evidence" value="ECO:0007669"/>
    <property type="project" value="UniProtKB-UniRule"/>
</dbReference>
<dbReference type="GO" id="GO:0006412">
    <property type="term" value="P:translation"/>
    <property type="evidence" value="ECO:0007669"/>
    <property type="project" value="UniProtKB-UniRule"/>
</dbReference>
<dbReference type="FunFam" id="3.30.70.600:FF:000001">
    <property type="entry name" value="30S ribosomal protein S10"/>
    <property type="match status" value="1"/>
</dbReference>
<dbReference type="Gene3D" id="3.30.70.600">
    <property type="entry name" value="Ribosomal protein S10 domain"/>
    <property type="match status" value="1"/>
</dbReference>
<dbReference type="HAMAP" id="MF_00508">
    <property type="entry name" value="Ribosomal_uS10"/>
    <property type="match status" value="1"/>
</dbReference>
<dbReference type="InterPro" id="IPR001848">
    <property type="entry name" value="Ribosomal_uS10"/>
</dbReference>
<dbReference type="InterPro" id="IPR018268">
    <property type="entry name" value="Ribosomal_uS10_CS"/>
</dbReference>
<dbReference type="InterPro" id="IPR027486">
    <property type="entry name" value="Ribosomal_uS10_dom"/>
</dbReference>
<dbReference type="InterPro" id="IPR036838">
    <property type="entry name" value="Ribosomal_uS10_dom_sf"/>
</dbReference>
<dbReference type="NCBIfam" id="NF001861">
    <property type="entry name" value="PRK00596.1"/>
    <property type="match status" value="1"/>
</dbReference>
<dbReference type="NCBIfam" id="TIGR01049">
    <property type="entry name" value="rpsJ_bact"/>
    <property type="match status" value="1"/>
</dbReference>
<dbReference type="PANTHER" id="PTHR11700">
    <property type="entry name" value="30S RIBOSOMAL PROTEIN S10 FAMILY MEMBER"/>
    <property type="match status" value="1"/>
</dbReference>
<dbReference type="Pfam" id="PF00338">
    <property type="entry name" value="Ribosomal_S10"/>
    <property type="match status" value="1"/>
</dbReference>
<dbReference type="PRINTS" id="PR00971">
    <property type="entry name" value="RIBOSOMALS10"/>
</dbReference>
<dbReference type="SMART" id="SM01403">
    <property type="entry name" value="Ribosomal_S10"/>
    <property type="match status" value="1"/>
</dbReference>
<dbReference type="SUPFAM" id="SSF54999">
    <property type="entry name" value="Ribosomal protein S10"/>
    <property type="match status" value="1"/>
</dbReference>
<dbReference type="PROSITE" id="PS00361">
    <property type="entry name" value="RIBOSOMAL_S10"/>
    <property type="match status" value="1"/>
</dbReference>
<organism>
    <name type="scientific">Pseudomonas putida (strain GB-1)</name>
    <dbReference type="NCBI Taxonomy" id="76869"/>
    <lineage>
        <taxon>Bacteria</taxon>
        <taxon>Pseudomonadati</taxon>
        <taxon>Pseudomonadota</taxon>
        <taxon>Gammaproteobacteria</taxon>
        <taxon>Pseudomonadales</taxon>
        <taxon>Pseudomonadaceae</taxon>
        <taxon>Pseudomonas</taxon>
    </lineage>
</organism>